<accession>B3E3H5</accession>
<evidence type="ECO:0000255" key="1">
    <source>
        <dbReference type="HAMAP-Rule" id="MF_00105"/>
    </source>
</evidence>
<dbReference type="EMBL" id="CP001089">
    <property type="protein sequence ID" value="ACD95794.1"/>
    <property type="molecule type" value="Genomic_DNA"/>
</dbReference>
<dbReference type="RefSeq" id="WP_012470133.1">
    <property type="nucleotide sequence ID" value="NC_010814.1"/>
</dbReference>
<dbReference type="SMR" id="B3E3H5"/>
<dbReference type="STRING" id="398767.Glov_2078"/>
<dbReference type="KEGG" id="glo:Glov_2078"/>
<dbReference type="eggNOG" id="COG0782">
    <property type="taxonomic scope" value="Bacteria"/>
</dbReference>
<dbReference type="HOGENOM" id="CLU_101379_2_0_7"/>
<dbReference type="OrthoDB" id="9808774at2"/>
<dbReference type="Proteomes" id="UP000002420">
    <property type="component" value="Chromosome"/>
</dbReference>
<dbReference type="GO" id="GO:0003677">
    <property type="term" value="F:DNA binding"/>
    <property type="evidence" value="ECO:0007669"/>
    <property type="project" value="UniProtKB-UniRule"/>
</dbReference>
<dbReference type="GO" id="GO:0070063">
    <property type="term" value="F:RNA polymerase binding"/>
    <property type="evidence" value="ECO:0007669"/>
    <property type="project" value="InterPro"/>
</dbReference>
<dbReference type="GO" id="GO:0006354">
    <property type="term" value="P:DNA-templated transcription elongation"/>
    <property type="evidence" value="ECO:0007669"/>
    <property type="project" value="TreeGrafter"/>
</dbReference>
<dbReference type="GO" id="GO:0032784">
    <property type="term" value="P:regulation of DNA-templated transcription elongation"/>
    <property type="evidence" value="ECO:0007669"/>
    <property type="project" value="UniProtKB-UniRule"/>
</dbReference>
<dbReference type="FunFam" id="1.10.287.180:FF:000001">
    <property type="entry name" value="Transcription elongation factor GreA"/>
    <property type="match status" value="1"/>
</dbReference>
<dbReference type="FunFam" id="3.10.50.30:FF:000001">
    <property type="entry name" value="Transcription elongation factor GreA"/>
    <property type="match status" value="1"/>
</dbReference>
<dbReference type="Gene3D" id="3.10.50.30">
    <property type="entry name" value="Transcription elongation factor, GreA/GreB, C-terminal domain"/>
    <property type="match status" value="1"/>
</dbReference>
<dbReference type="Gene3D" id="1.10.287.180">
    <property type="entry name" value="Transcription elongation factor, GreA/GreB, N-terminal domain"/>
    <property type="match status" value="1"/>
</dbReference>
<dbReference type="HAMAP" id="MF_00105">
    <property type="entry name" value="GreA_GreB"/>
    <property type="match status" value="1"/>
</dbReference>
<dbReference type="InterPro" id="IPR036953">
    <property type="entry name" value="GreA/GreB_C_sf"/>
</dbReference>
<dbReference type="InterPro" id="IPR018151">
    <property type="entry name" value="TF_GreA/GreB_CS"/>
</dbReference>
<dbReference type="InterPro" id="IPR006359">
    <property type="entry name" value="Tscrpt_elong_fac_GreA"/>
</dbReference>
<dbReference type="InterPro" id="IPR028624">
    <property type="entry name" value="Tscrpt_elong_fac_GreA/B"/>
</dbReference>
<dbReference type="InterPro" id="IPR001437">
    <property type="entry name" value="Tscrpt_elong_fac_GreA/B_C"/>
</dbReference>
<dbReference type="InterPro" id="IPR023459">
    <property type="entry name" value="Tscrpt_elong_fac_GreA/B_fam"/>
</dbReference>
<dbReference type="InterPro" id="IPR022691">
    <property type="entry name" value="Tscrpt_elong_fac_GreA/B_N"/>
</dbReference>
<dbReference type="InterPro" id="IPR036805">
    <property type="entry name" value="Tscrpt_elong_fac_GreA/B_N_sf"/>
</dbReference>
<dbReference type="NCBIfam" id="TIGR01462">
    <property type="entry name" value="greA"/>
    <property type="match status" value="1"/>
</dbReference>
<dbReference type="NCBIfam" id="NF001261">
    <property type="entry name" value="PRK00226.1-2"/>
    <property type="match status" value="1"/>
</dbReference>
<dbReference type="NCBIfam" id="NF001263">
    <property type="entry name" value="PRK00226.1-4"/>
    <property type="match status" value="1"/>
</dbReference>
<dbReference type="NCBIfam" id="NF001264">
    <property type="entry name" value="PRK00226.1-5"/>
    <property type="match status" value="1"/>
</dbReference>
<dbReference type="PANTHER" id="PTHR30437">
    <property type="entry name" value="TRANSCRIPTION ELONGATION FACTOR GREA"/>
    <property type="match status" value="1"/>
</dbReference>
<dbReference type="PANTHER" id="PTHR30437:SF4">
    <property type="entry name" value="TRANSCRIPTION ELONGATION FACTOR GREA"/>
    <property type="match status" value="1"/>
</dbReference>
<dbReference type="Pfam" id="PF01272">
    <property type="entry name" value="GreA_GreB"/>
    <property type="match status" value="1"/>
</dbReference>
<dbReference type="Pfam" id="PF03449">
    <property type="entry name" value="GreA_GreB_N"/>
    <property type="match status" value="1"/>
</dbReference>
<dbReference type="PIRSF" id="PIRSF006092">
    <property type="entry name" value="GreA_GreB"/>
    <property type="match status" value="1"/>
</dbReference>
<dbReference type="SUPFAM" id="SSF54534">
    <property type="entry name" value="FKBP-like"/>
    <property type="match status" value="1"/>
</dbReference>
<dbReference type="SUPFAM" id="SSF46557">
    <property type="entry name" value="GreA transcript cleavage protein, N-terminal domain"/>
    <property type="match status" value="1"/>
</dbReference>
<dbReference type="PROSITE" id="PS00829">
    <property type="entry name" value="GREAB_1"/>
    <property type="match status" value="1"/>
</dbReference>
<dbReference type="PROSITE" id="PS00830">
    <property type="entry name" value="GREAB_2"/>
    <property type="match status" value="1"/>
</dbReference>
<keyword id="KW-0175">Coiled coil</keyword>
<keyword id="KW-0238">DNA-binding</keyword>
<keyword id="KW-1185">Reference proteome</keyword>
<keyword id="KW-0804">Transcription</keyword>
<keyword id="KW-0805">Transcription regulation</keyword>
<feature type="chain" id="PRO_1000094170" description="Transcription elongation factor GreA">
    <location>
        <begin position="1"/>
        <end position="158"/>
    </location>
</feature>
<feature type="coiled-coil region" evidence="1">
    <location>
        <begin position="1"/>
        <end position="67"/>
    </location>
</feature>
<organism>
    <name type="scientific">Trichlorobacter lovleyi (strain ATCC BAA-1151 / DSM 17278 / SZ)</name>
    <name type="common">Geobacter lovleyi</name>
    <dbReference type="NCBI Taxonomy" id="398767"/>
    <lineage>
        <taxon>Bacteria</taxon>
        <taxon>Pseudomonadati</taxon>
        <taxon>Thermodesulfobacteriota</taxon>
        <taxon>Desulfuromonadia</taxon>
        <taxon>Geobacterales</taxon>
        <taxon>Geobacteraceae</taxon>
        <taxon>Trichlorobacter</taxon>
    </lineage>
</organism>
<comment type="function">
    <text evidence="1">Necessary for efficient RNA polymerase transcription elongation past template-encoded arresting sites. The arresting sites in DNA have the property of trapping a certain fraction of elongating RNA polymerases that pass through, resulting in locked ternary complexes. Cleavage of the nascent transcript by cleavage factors such as GreA or GreB allows the resumption of elongation from the new 3'terminus. GreA releases sequences of 2 to 3 nucleotides.</text>
</comment>
<comment type="similarity">
    <text evidence="1">Belongs to the GreA/GreB family.</text>
</comment>
<sequence>MSNNIPLTKESYEALQEELKRLIREERPKVIQDIAEARSHGDLSENAEYDAAKNRQGFIEGRIQELQGKLARAHVVDLTGLKPDKVVFGATVTLYDTASEEEITYKIVGEDEADIKLGKISCTSPVGKALIGHKLDDSVKVKVPAGTKEYEIIEIKYE</sequence>
<name>GREA_TRIL1</name>
<proteinExistence type="inferred from homology"/>
<gene>
    <name evidence="1" type="primary">greA</name>
    <name type="ordered locus">Glov_2078</name>
</gene>
<reference key="1">
    <citation type="submission" date="2008-05" db="EMBL/GenBank/DDBJ databases">
        <title>Complete sequence of chromosome of Geobacter lovleyi SZ.</title>
        <authorList>
            <consortium name="US DOE Joint Genome Institute"/>
            <person name="Lucas S."/>
            <person name="Copeland A."/>
            <person name="Lapidus A."/>
            <person name="Glavina del Rio T."/>
            <person name="Dalin E."/>
            <person name="Tice H."/>
            <person name="Bruce D."/>
            <person name="Goodwin L."/>
            <person name="Pitluck S."/>
            <person name="Chertkov O."/>
            <person name="Meincke L."/>
            <person name="Brettin T."/>
            <person name="Detter J.C."/>
            <person name="Han C."/>
            <person name="Tapia R."/>
            <person name="Kuske C.R."/>
            <person name="Schmutz J."/>
            <person name="Larimer F."/>
            <person name="Land M."/>
            <person name="Hauser L."/>
            <person name="Kyrpides N."/>
            <person name="Mikhailova N."/>
            <person name="Sung Y."/>
            <person name="Fletcher K.E."/>
            <person name="Ritalahti K.M."/>
            <person name="Loeffler F.E."/>
            <person name="Richardson P."/>
        </authorList>
    </citation>
    <scope>NUCLEOTIDE SEQUENCE [LARGE SCALE GENOMIC DNA]</scope>
    <source>
        <strain>ATCC BAA-1151 / DSM 17278 / SZ</strain>
    </source>
</reference>
<protein>
    <recommendedName>
        <fullName evidence="1">Transcription elongation factor GreA</fullName>
    </recommendedName>
    <alternativeName>
        <fullName evidence="1">Transcript cleavage factor GreA</fullName>
    </alternativeName>
</protein>